<protein>
    <recommendedName>
        <fullName evidence="1">Probable cytosolic iron-sulfur protein assembly protein Ciao1</fullName>
    </recommendedName>
</protein>
<evidence type="ECO:0000255" key="1">
    <source>
        <dbReference type="HAMAP-Rule" id="MF_03037"/>
    </source>
</evidence>
<feature type="chain" id="PRO_0000382480" description="Probable cytosolic iron-sulfur protein assembly protein Ciao1">
    <location>
        <begin position="1"/>
        <end position="337"/>
    </location>
</feature>
<feature type="repeat" description="WD 1">
    <location>
        <begin position="12"/>
        <end position="51"/>
    </location>
</feature>
<feature type="repeat" description="WD 2">
    <location>
        <begin position="58"/>
        <end position="97"/>
    </location>
</feature>
<feature type="repeat" description="WD 3">
    <location>
        <begin position="102"/>
        <end position="141"/>
    </location>
</feature>
<feature type="repeat" description="WD 4">
    <location>
        <begin position="147"/>
        <end position="186"/>
    </location>
</feature>
<feature type="repeat" description="WD 5">
    <location>
        <begin position="193"/>
        <end position="232"/>
    </location>
</feature>
<feature type="repeat" description="WD 6">
    <location>
        <begin position="251"/>
        <end position="290"/>
    </location>
</feature>
<feature type="repeat" description="WD 7">
    <location>
        <begin position="301"/>
        <end position="337"/>
    </location>
</feature>
<dbReference type="EMBL" id="CH477256">
    <property type="protein sequence ID" value="EAT45868.1"/>
    <property type="molecule type" value="Genomic_DNA"/>
</dbReference>
<dbReference type="RefSeq" id="XP_001662680.1">
    <property type="nucleotide sequence ID" value="XM_001662630.1"/>
</dbReference>
<dbReference type="SMR" id="Q17GR9"/>
<dbReference type="FunCoup" id="Q17GR9">
    <property type="interactions" value="668"/>
</dbReference>
<dbReference type="STRING" id="7159.Q17GR9"/>
<dbReference type="PaxDb" id="7159-AAEL002912-PA"/>
<dbReference type="GeneID" id="5576487"/>
<dbReference type="KEGG" id="aag:5576487"/>
<dbReference type="CTD" id="9391"/>
<dbReference type="VEuPathDB" id="VectorBase:AAEL002912"/>
<dbReference type="eggNOG" id="KOG0645">
    <property type="taxonomic scope" value="Eukaryota"/>
</dbReference>
<dbReference type="HOGENOM" id="CLU_000288_57_8_1"/>
<dbReference type="InParanoid" id="Q17GR9"/>
<dbReference type="OMA" id="IREIRWS"/>
<dbReference type="OrthoDB" id="284782at2759"/>
<dbReference type="PhylomeDB" id="Q17GR9"/>
<dbReference type="Proteomes" id="UP000008820">
    <property type="component" value="Unassembled WGS sequence"/>
</dbReference>
<dbReference type="Proteomes" id="UP000682892">
    <property type="component" value="Chromosome 1"/>
</dbReference>
<dbReference type="GO" id="GO:0097361">
    <property type="term" value="C:cytosolic [4Fe-4S] assembly targeting complex"/>
    <property type="evidence" value="ECO:0007669"/>
    <property type="project" value="InterPro"/>
</dbReference>
<dbReference type="GO" id="GO:0016226">
    <property type="term" value="P:iron-sulfur cluster assembly"/>
    <property type="evidence" value="ECO:0007669"/>
    <property type="project" value="UniProtKB-UniRule"/>
</dbReference>
<dbReference type="GO" id="GO:0051604">
    <property type="term" value="P:protein maturation"/>
    <property type="evidence" value="ECO:0000250"/>
    <property type="project" value="UniProtKB"/>
</dbReference>
<dbReference type="CDD" id="cd00200">
    <property type="entry name" value="WD40"/>
    <property type="match status" value="1"/>
</dbReference>
<dbReference type="FunFam" id="2.130.10.10:FF:000136">
    <property type="entry name" value="Probable cytosolic iron-sulfur protein assembly protein CIAO1"/>
    <property type="match status" value="1"/>
</dbReference>
<dbReference type="Gene3D" id="2.130.10.10">
    <property type="entry name" value="YVTN repeat-like/Quinoprotein amine dehydrogenase"/>
    <property type="match status" value="1"/>
</dbReference>
<dbReference type="HAMAP" id="MF_03037">
    <property type="entry name" value="ciao1"/>
    <property type="match status" value="1"/>
</dbReference>
<dbReference type="InterPro" id="IPR028608">
    <property type="entry name" value="CIAO1/Cia1"/>
</dbReference>
<dbReference type="InterPro" id="IPR020472">
    <property type="entry name" value="G-protein_beta_WD-40_rep"/>
</dbReference>
<dbReference type="InterPro" id="IPR015943">
    <property type="entry name" value="WD40/YVTN_repeat-like_dom_sf"/>
</dbReference>
<dbReference type="InterPro" id="IPR019775">
    <property type="entry name" value="WD40_repeat_CS"/>
</dbReference>
<dbReference type="InterPro" id="IPR036322">
    <property type="entry name" value="WD40_repeat_dom_sf"/>
</dbReference>
<dbReference type="InterPro" id="IPR001680">
    <property type="entry name" value="WD40_rpt"/>
</dbReference>
<dbReference type="PANTHER" id="PTHR19920:SF0">
    <property type="entry name" value="CYTOSOLIC IRON-SULFUR PROTEIN ASSEMBLY PROTEIN CIAO1-RELATED"/>
    <property type="match status" value="1"/>
</dbReference>
<dbReference type="PANTHER" id="PTHR19920">
    <property type="entry name" value="WD40 PROTEIN CIAO1"/>
    <property type="match status" value="1"/>
</dbReference>
<dbReference type="Pfam" id="PF00400">
    <property type="entry name" value="WD40"/>
    <property type="match status" value="7"/>
</dbReference>
<dbReference type="PRINTS" id="PR00320">
    <property type="entry name" value="GPROTEINBRPT"/>
</dbReference>
<dbReference type="SMART" id="SM00320">
    <property type="entry name" value="WD40"/>
    <property type="match status" value="7"/>
</dbReference>
<dbReference type="SUPFAM" id="SSF50978">
    <property type="entry name" value="WD40 repeat-like"/>
    <property type="match status" value="1"/>
</dbReference>
<dbReference type="PROSITE" id="PS00678">
    <property type="entry name" value="WD_REPEATS_1"/>
    <property type="match status" value="1"/>
</dbReference>
<dbReference type="PROSITE" id="PS50082">
    <property type="entry name" value="WD_REPEATS_2"/>
    <property type="match status" value="6"/>
</dbReference>
<dbReference type="PROSITE" id="PS50294">
    <property type="entry name" value="WD_REPEATS_REGION"/>
    <property type="match status" value="1"/>
</dbReference>
<keyword id="KW-1185">Reference proteome</keyword>
<keyword id="KW-0677">Repeat</keyword>
<keyword id="KW-0853">WD repeat</keyword>
<sequence>MGKLELLQCLTGHRGRAWGAGWHPKGNVLATCGEDKTIRIWAEDASQRWVAKTVLSDGHSRTIRDVAWSPCGQYLASASFDATVAIWDKKSGEFECNATLEGHENEVKSVSWSKSGSLLATCSRDKSVWVWEVAQEDEYECAAVLNTHTQDVKKVEWHPHEDILASASYDNTIKLYKEDLADSDWSSFDTLVSHESTVWSISFDGSGNRLASCSDDQTVKIWQEYKPGNEFGVSCPDNTPVWKCVCTLAGYHSRSVYDISWCKQSGLLATACGDDMVRIFKEVEGSSPHEPTFEMVGSKHAHSQDVNTVEWNPTVVGLLVTTSDDGDVKLWKYEPEE</sequence>
<name>CIAO1_AEDAE</name>
<proteinExistence type="inferred from homology"/>
<comment type="function">
    <text evidence="1">Essential component of the cytosolic iron-sulfur (Fe/S) protein assembly machinery. Required for the maturation of extramitochondrial Fe/S proteins.</text>
</comment>
<comment type="similarity">
    <text evidence="1">Belongs to the WD repeat CIA1 family.</text>
</comment>
<reference key="1">
    <citation type="journal article" date="2007" name="Science">
        <title>Genome sequence of Aedes aegypti, a major arbovirus vector.</title>
        <authorList>
            <person name="Nene V."/>
            <person name="Wortman J.R."/>
            <person name="Lawson D."/>
            <person name="Haas B.J."/>
            <person name="Kodira C.D."/>
            <person name="Tu Z.J."/>
            <person name="Loftus B.J."/>
            <person name="Xi Z."/>
            <person name="Megy K."/>
            <person name="Grabherr M."/>
            <person name="Ren Q."/>
            <person name="Zdobnov E.M."/>
            <person name="Lobo N.F."/>
            <person name="Campbell K.S."/>
            <person name="Brown S.E."/>
            <person name="Bonaldo M.F."/>
            <person name="Zhu J."/>
            <person name="Sinkins S.P."/>
            <person name="Hogenkamp D.G."/>
            <person name="Amedeo P."/>
            <person name="Arensburger P."/>
            <person name="Atkinson P.W."/>
            <person name="Bidwell S.L."/>
            <person name="Biedler J."/>
            <person name="Birney E."/>
            <person name="Bruggner R.V."/>
            <person name="Costas J."/>
            <person name="Coy M.R."/>
            <person name="Crabtree J."/>
            <person name="Crawford M."/>
            <person name="DeBruyn B."/>
            <person name="DeCaprio D."/>
            <person name="Eiglmeier K."/>
            <person name="Eisenstadt E."/>
            <person name="El-Dorry H."/>
            <person name="Gelbart W.M."/>
            <person name="Gomes S.L."/>
            <person name="Hammond M."/>
            <person name="Hannick L.I."/>
            <person name="Hogan J.R."/>
            <person name="Holmes M.H."/>
            <person name="Jaffe D."/>
            <person name="Johnston S.J."/>
            <person name="Kennedy R.C."/>
            <person name="Koo H."/>
            <person name="Kravitz S."/>
            <person name="Kriventseva E.V."/>
            <person name="Kulp D."/>
            <person name="Labutti K."/>
            <person name="Lee E."/>
            <person name="Li S."/>
            <person name="Lovin D.D."/>
            <person name="Mao C."/>
            <person name="Mauceli E."/>
            <person name="Menck C.F."/>
            <person name="Miller J.R."/>
            <person name="Montgomery P."/>
            <person name="Mori A."/>
            <person name="Nascimento A.L."/>
            <person name="Naveira H.F."/>
            <person name="Nusbaum C."/>
            <person name="O'Leary S.B."/>
            <person name="Orvis J."/>
            <person name="Pertea M."/>
            <person name="Quesneville H."/>
            <person name="Reidenbach K.R."/>
            <person name="Rogers Y.-H.C."/>
            <person name="Roth C.W."/>
            <person name="Schneider J.R."/>
            <person name="Schatz M."/>
            <person name="Shumway M."/>
            <person name="Stanke M."/>
            <person name="Stinson E.O."/>
            <person name="Tubio J.M.C."/>
            <person name="Vanzee J.P."/>
            <person name="Verjovski-Almeida S."/>
            <person name="Werner D."/>
            <person name="White O.R."/>
            <person name="Wyder S."/>
            <person name="Zeng Q."/>
            <person name="Zhao Q."/>
            <person name="Zhao Y."/>
            <person name="Hill C.A."/>
            <person name="Raikhel A.S."/>
            <person name="Soares M.B."/>
            <person name="Knudson D.L."/>
            <person name="Lee N.H."/>
            <person name="Galagan J."/>
            <person name="Salzberg S.L."/>
            <person name="Paulsen I.T."/>
            <person name="Dimopoulos G."/>
            <person name="Collins F.H."/>
            <person name="Bruce B."/>
            <person name="Fraser-Liggett C.M."/>
            <person name="Severson D.W."/>
        </authorList>
    </citation>
    <scope>NUCLEOTIDE SEQUENCE [LARGE SCALE GENOMIC DNA]</scope>
    <source>
        <strain>LVPib12</strain>
    </source>
</reference>
<gene>
    <name evidence="1" type="primary">Ciao1</name>
    <name type="ORF">AAEL002912</name>
</gene>
<organism>
    <name type="scientific">Aedes aegypti</name>
    <name type="common">Yellowfever mosquito</name>
    <name type="synonym">Culex aegypti</name>
    <dbReference type="NCBI Taxonomy" id="7159"/>
    <lineage>
        <taxon>Eukaryota</taxon>
        <taxon>Metazoa</taxon>
        <taxon>Ecdysozoa</taxon>
        <taxon>Arthropoda</taxon>
        <taxon>Hexapoda</taxon>
        <taxon>Insecta</taxon>
        <taxon>Pterygota</taxon>
        <taxon>Neoptera</taxon>
        <taxon>Endopterygota</taxon>
        <taxon>Diptera</taxon>
        <taxon>Nematocera</taxon>
        <taxon>Culicoidea</taxon>
        <taxon>Culicidae</taxon>
        <taxon>Culicinae</taxon>
        <taxon>Aedini</taxon>
        <taxon>Aedes</taxon>
        <taxon>Stegomyia</taxon>
    </lineage>
</organism>
<accession>Q17GR9</accession>